<comment type="function">
    <text evidence="2">Antioxidant protein with alkyl hydroperoxidase activity. Required for the reduction of the AhpC active site cysteine residues and for the regeneration of the AhpC enzyme activity.</text>
</comment>
<comment type="catalytic activity">
    <reaction evidence="2">
        <text>N(6)-[(R)-dihydrolipoyl]-L-lysyl-[lipoyl-carrier protein] + a hydroperoxide = N(6)-[(R)-lipoyl]-L-lysyl-[lipoyl-carrier protein] + an alcohol + H2O</text>
        <dbReference type="Rhea" id="RHEA:62636"/>
        <dbReference type="Rhea" id="RHEA-COMP:10502"/>
        <dbReference type="Rhea" id="RHEA-COMP:16355"/>
        <dbReference type="ChEBI" id="CHEBI:15377"/>
        <dbReference type="ChEBI" id="CHEBI:30879"/>
        <dbReference type="ChEBI" id="CHEBI:35924"/>
        <dbReference type="ChEBI" id="CHEBI:83099"/>
        <dbReference type="ChEBI" id="CHEBI:83100"/>
        <dbReference type="EC" id="1.11.1.28"/>
    </reaction>
</comment>
<comment type="similarity">
    <text evidence="2">Belongs to the AhpD family.</text>
</comment>
<protein>
    <recommendedName>
        <fullName evidence="2">Alkyl hydroperoxide reductase AhpD</fullName>
        <ecNumber evidence="2">1.11.1.28</ecNumber>
    </recommendedName>
    <alternativeName>
        <fullName evidence="2">Alkylhydroperoxidase AhpD</fullName>
    </alternativeName>
</protein>
<organism>
    <name type="scientific">Brucella canis (strain ATCC 23365 / NCTC 10854 / RM-666)</name>
    <dbReference type="NCBI Taxonomy" id="483179"/>
    <lineage>
        <taxon>Bacteria</taxon>
        <taxon>Pseudomonadati</taxon>
        <taxon>Pseudomonadota</taxon>
        <taxon>Alphaproteobacteria</taxon>
        <taxon>Hyphomicrobiales</taxon>
        <taxon>Brucellaceae</taxon>
        <taxon>Brucella/Ochrobactrum group</taxon>
        <taxon>Brucella</taxon>
    </lineage>
</organism>
<evidence type="ECO:0000250" key="1"/>
<evidence type="ECO:0000255" key="2">
    <source>
        <dbReference type="HAMAP-Rule" id="MF_01676"/>
    </source>
</evidence>
<feature type="chain" id="PRO_0000359479" description="Alkyl hydroperoxide reductase AhpD">
    <location>
        <begin position="1"/>
        <end position="175"/>
    </location>
</feature>
<feature type="active site" description="Proton donor" evidence="2">
    <location>
        <position position="131"/>
    </location>
</feature>
<feature type="active site" description="Cysteine sulfenic acid (-SOH) intermediate" evidence="2">
    <location>
        <position position="134"/>
    </location>
</feature>
<feature type="disulfide bond" evidence="1">
    <location>
        <begin position="131"/>
        <end position="134"/>
    </location>
</feature>
<feature type="disulfide bond" description="Interchain (with AhpC); in linked form" evidence="2">
    <location>
        <position position="134"/>
    </location>
</feature>
<name>AHPD_BRUC2</name>
<sequence>MSIDDLKSKIPDFAKDVRLNLSSMASNETLTPQQKYGLFVACGIASRNADVRKALVAEAAGKVDASVIQAAKAAASIMGMNNVYYRFVHLASNKDYRTMPARLRMNVISNPGVDKVDFELWSLAVSAINGCGMCIDAHEDVLRKANVTAEAIQAAVRFASIIQSAAIALEAADTE</sequence>
<keyword id="KW-0049">Antioxidant</keyword>
<keyword id="KW-1015">Disulfide bond</keyword>
<keyword id="KW-0560">Oxidoreductase</keyword>
<keyword id="KW-0575">Peroxidase</keyword>
<keyword id="KW-0676">Redox-active center</keyword>
<keyword id="KW-1185">Reference proteome</keyword>
<dbReference type="EC" id="1.11.1.28" evidence="2"/>
<dbReference type="EMBL" id="CP000873">
    <property type="protein sequence ID" value="ABX63881.1"/>
    <property type="molecule type" value="Genomic_DNA"/>
</dbReference>
<dbReference type="RefSeq" id="WP_004690255.1">
    <property type="nucleotide sequence ID" value="NC_010104.1"/>
</dbReference>
<dbReference type="SMR" id="A9MBZ4"/>
<dbReference type="GeneID" id="55592363"/>
<dbReference type="KEGG" id="bcs:BCAN_B0711"/>
<dbReference type="HOGENOM" id="CLU_105328_0_0_5"/>
<dbReference type="PhylomeDB" id="A9MBZ4"/>
<dbReference type="Proteomes" id="UP000001385">
    <property type="component" value="Chromosome II"/>
</dbReference>
<dbReference type="GO" id="GO:0008785">
    <property type="term" value="F:alkyl hydroperoxide reductase activity"/>
    <property type="evidence" value="ECO:0007669"/>
    <property type="project" value="UniProtKB-UniRule"/>
</dbReference>
<dbReference type="GO" id="GO:0015036">
    <property type="term" value="F:disulfide oxidoreductase activity"/>
    <property type="evidence" value="ECO:0007669"/>
    <property type="project" value="TreeGrafter"/>
</dbReference>
<dbReference type="GO" id="GO:0032843">
    <property type="term" value="F:hydroperoxide reductase activity"/>
    <property type="evidence" value="ECO:0007669"/>
    <property type="project" value="InterPro"/>
</dbReference>
<dbReference type="GO" id="GO:0051920">
    <property type="term" value="F:peroxiredoxin activity"/>
    <property type="evidence" value="ECO:0007669"/>
    <property type="project" value="InterPro"/>
</dbReference>
<dbReference type="GO" id="GO:0045454">
    <property type="term" value="P:cell redox homeostasis"/>
    <property type="evidence" value="ECO:0007669"/>
    <property type="project" value="TreeGrafter"/>
</dbReference>
<dbReference type="GO" id="GO:0006979">
    <property type="term" value="P:response to oxidative stress"/>
    <property type="evidence" value="ECO:0007669"/>
    <property type="project" value="InterPro"/>
</dbReference>
<dbReference type="Gene3D" id="1.20.1290.10">
    <property type="entry name" value="AhpD-like"/>
    <property type="match status" value="1"/>
</dbReference>
<dbReference type="HAMAP" id="MF_01676">
    <property type="entry name" value="AhpD"/>
    <property type="match status" value="1"/>
</dbReference>
<dbReference type="InterPro" id="IPR004674">
    <property type="entry name" value="AhpD"/>
</dbReference>
<dbReference type="InterPro" id="IPR029032">
    <property type="entry name" value="AhpD-like"/>
</dbReference>
<dbReference type="InterPro" id="IPR004675">
    <property type="entry name" value="AhpD_core"/>
</dbReference>
<dbReference type="InterPro" id="IPR003779">
    <property type="entry name" value="CMD-like"/>
</dbReference>
<dbReference type="NCBIfam" id="TIGR00777">
    <property type="entry name" value="ahpD"/>
    <property type="match status" value="1"/>
</dbReference>
<dbReference type="NCBIfam" id="TIGR00778">
    <property type="entry name" value="ahpD_dom"/>
    <property type="match status" value="1"/>
</dbReference>
<dbReference type="PANTHER" id="PTHR33930">
    <property type="entry name" value="ALKYL HYDROPEROXIDE REDUCTASE AHPD"/>
    <property type="match status" value="1"/>
</dbReference>
<dbReference type="PANTHER" id="PTHR33930:SF7">
    <property type="entry name" value="ALKYL HYDROPEROXIDE REDUCTASE AHPD"/>
    <property type="match status" value="1"/>
</dbReference>
<dbReference type="Pfam" id="PF02627">
    <property type="entry name" value="CMD"/>
    <property type="match status" value="1"/>
</dbReference>
<dbReference type="SUPFAM" id="SSF69118">
    <property type="entry name" value="AhpD-like"/>
    <property type="match status" value="1"/>
</dbReference>
<gene>
    <name evidence="2" type="primary">ahpD</name>
    <name type="ordered locus">BCAN_B0711</name>
</gene>
<reference key="1">
    <citation type="submission" date="2007-10" db="EMBL/GenBank/DDBJ databases">
        <title>Brucella canis ATCC 23365 whole genome shotgun sequencing project.</title>
        <authorList>
            <person name="Setubal J.C."/>
            <person name="Bowns C."/>
            <person name="Boyle S."/>
            <person name="Crasta O.R."/>
            <person name="Czar M.J."/>
            <person name="Dharmanolla C."/>
            <person name="Gillespie J.J."/>
            <person name="Kenyon R.W."/>
            <person name="Lu J."/>
            <person name="Mane S."/>
            <person name="Mohapatra S."/>
            <person name="Nagrani S."/>
            <person name="Purkayastha A."/>
            <person name="Rajasimha H.K."/>
            <person name="Shallom J.M."/>
            <person name="Shallom S."/>
            <person name="Shukla M."/>
            <person name="Snyder E.E."/>
            <person name="Sobral B.W."/>
            <person name="Wattam A.R."/>
            <person name="Will R."/>
            <person name="Williams K."/>
            <person name="Yoo H."/>
            <person name="Bruce D."/>
            <person name="Detter C."/>
            <person name="Munk C."/>
            <person name="Brettin T.S."/>
        </authorList>
    </citation>
    <scope>NUCLEOTIDE SEQUENCE [LARGE SCALE GENOMIC DNA]</scope>
    <source>
        <strain>ATCC 23365 / NCTC 10854 / RM-666</strain>
    </source>
</reference>
<accession>A9MBZ4</accession>
<proteinExistence type="inferred from homology"/>